<evidence type="ECO:0000250" key="1"/>
<evidence type="ECO:0000255" key="2">
    <source>
        <dbReference type="PROSITE-ProRule" id="PRU01076"/>
    </source>
</evidence>
<evidence type="ECO:0000305" key="3"/>
<protein>
    <recommendedName>
        <fullName>Antitoxin VapB40</fullName>
    </recommendedName>
</protein>
<sequence length="81" mass="9250">MRTTIDVAGRLVIPKRIRERLGLRGNDQVEITERDGRIEIEPAPTGVELVREGSVLVARPERPLPPLTDEIVRETLDRTRR</sequence>
<proteinExistence type="inferred from homology"/>
<accession>P9WFC2</accession>
<accession>L0TAC2</accession>
<accession>P65027</accession>
<accession>Q50626</accession>
<dbReference type="EMBL" id="AE000516">
    <property type="status" value="NOT_ANNOTATED_CDS"/>
    <property type="molecule type" value="Genomic_DNA"/>
</dbReference>
<dbReference type="PIR" id="B70727">
    <property type="entry name" value="B70727"/>
</dbReference>
<dbReference type="RefSeq" id="WP_003413429.1">
    <property type="nucleotide sequence ID" value="NZ_KK341227.1"/>
</dbReference>
<dbReference type="SMR" id="P9WFC2"/>
<dbReference type="PATRIC" id="fig|83331.31.peg.2879"/>
<dbReference type="Proteomes" id="UP000001020">
    <property type="component" value="Chromosome"/>
</dbReference>
<dbReference type="GO" id="GO:0003677">
    <property type="term" value="F:DNA binding"/>
    <property type="evidence" value="ECO:0007669"/>
    <property type="project" value="UniProtKB-KW"/>
</dbReference>
<dbReference type="Gene3D" id="2.10.260.10">
    <property type="match status" value="1"/>
</dbReference>
<dbReference type="InterPro" id="IPR007159">
    <property type="entry name" value="SpoVT-AbrB_dom"/>
</dbReference>
<dbReference type="InterPro" id="IPR037914">
    <property type="entry name" value="SpoVT-AbrB_sf"/>
</dbReference>
<dbReference type="NCBIfam" id="TIGR01439">
    <property type="entry name" value="lp_hng_hel_AbrB"/>
    <property type="match status" value="1"/>
</dbReference>
<dbReference type="Pfam" id="PF04014">
    <property type="entry name" value="MazE_antitoxin"/>
    <property type="match status" value="1"/>
</dbReference>
<dbReference type="SMART" id="SM00966">
    <property type="entry name" value="SpoVT_AbrB"/>
    <property type="match status" value="1"/>
</dbReference>
<dbReference type="SUPFAM" id="SSF89447">
    <property type="entry name" value="AbrB/MazE/MraZ-like"/>
    <property type="match status" value="1"/>
</dbReference>
<dbReference type="PROSITE" id="PS51740">
    <property type="entry name" value="SPOVT_ABRB"/>
    <property type="match status" value="1"/>
</dbReference>
<name>VPB40_MYCTO</name>
<keyword id="KW-0238">DNA-binding</keyword>
<keyword id="KW-1185">Reference proteome</keyword>
<keyword id="KW-1277">Toxin-antitoxin system</keyword>
<comment type="function">
    <text evidence="1">Antitoxin component of a type II toxin-antitoxin (TA) system. Its cognate toxin is VapC40 (By similarity).</text>
</comment>
<comment type="subunit">
    <text evidence="1">Physically interacts with cognate toxin VapC40.</text>
</comment>
<comment type="similarity">
    <text evidence="3">Belongs to the VapB family.</text>
</comment>
<gene>
    <name type="primary">vapB40</name>
    <name type="synonym">vapB-mt25</name>
    <name type="ordered locus">MT2671.1</name>
</gene>
<feature type="chain" id="PRO_0000428564" description="Antitoxin VapB40">
    <location>
        <begin position="1"/>
        <end position="81"/>
    </location>
</feature>
<feature type="domain" description="SpoVT-AbrB" evidence="2">
    <location>
        <begin position="1"/>
        <end position="45"/>
    </location>
</feature>
<organism>
    <name type="scientific">Mycobacterium tuberculosis (strain CDC 1551 / Oshkosh)</name>
    <dbReference type="NCBI Taxonomy" id="83331"/>
    <lineage>
        <taxon>Bacteria</taxon>
        <taxon>Bacillati</taxon>
        <taxon>Actinomycetota</taxon>
        <taxon>Actinomycetes</taxon>
        <taxon>Mycobacteriales</taxon>
        <taxon>Mycobacteriaceae</taxon>
        <taxon>Mycobacterium</taxon>
        <taxon>Mycobacterium tuberculosis complex</taxon>
    </lineage>
</organism>
<reference key="1">
    <citation type="journal article" date="2002" name="J. Bacteriol.">
        <title>Whole-genome comparison of Mycobacterium tuberculosis clinical and laboratory strains.</title>
        <authorList>
            <person name="Fleischmann R.D."/>
            <person name="Alland D."/>
            <person name="Eisen J.A."/>
            <person name="Carpenter L."/>
            <person name="White O."/>
            <person name="Peterson J.D."/>
            <person name="DeBoy R.T."/>
            <person name="Dodson R.J."/>
            <person name="Gwinn M.L."/>
            <person name="Haft D.H."/>
            <person name="Hickey E.K."/>
            <person name="Kolonay J.F."/>
            <person name="Nelson W.C."/>
            <person name="Umayam L.A."/>
            <person name="Ermolaeva M.D."/>
            <person name="Salzberg S.L."/>
            <person name="Delcher A."/>
            <person name="Utterback T.R."/>
            <person name="Weidman J.F."/>
            <person name="Khouri H.M."/>
            <person name="Gill J."/>
            <person name="Mikula A."/>
            <person name="Bishai W."/>
            <person name="Jacobs W.R. Jr."/>
            <person name="Venter J.C."/>
            <person name="Fraser C.M."/>
        </authorList>
    </citation>
    <scope>NUCLEOTIDE SEQUENCE [LARGE SCALE GENOMIC DNA]</scope>
    <source>
        <strain>CDC 1551 / Oshkosh</strain>
    </source>
</reference>